<proteinExistence type="inferred from homology"/>
<dbReference type="EC" id="7.1.1.-" evidence="1"/>
<dbReference type="EMBL" id="CP000744">
    <property type="protein sequence ID" value="ABR82631.1"/>
    <property type="molecule type" value="Genomic_DNA"/>
</dbReference>
<dbReference type="RefSeq" id="WP_012075442.1">
    <property type="nucleotide sequence ID" value="NC_009656.1"/>
</dbReference>
<dbReference type="SMR" id="A6V4E7"/>
<dbReference type="GeneID" id="77220824"/>
<dbReference type="KEGG" id="pap:PSPA7_2568"/>
<dbReference type="HOGENOM" id="CLU_015134_3_2_6"/>
<dbReference type="Proteomes" id="UP000001582">
    <property type="component" value="Chromosome"/>
</dbReference>
<dbReference type="GO" id="GO:0030964">
    <property type="term" value="C:NADH dehydrogenase complex"/>
    <property type="evidence" value="ECO:0007669"/>
    <property type="project" value="InterPro"/>
</dbReference>
<dbReference type="GO" id="GO:0005886">
    <property type="term" value="C:plasma membrane"/>
    <property type="evidence" value="ECO:0007669"/>
    <property type="project" value="UniProtKB-SubCell"/>
</dbReference>
<dbReference type="GO" id="GO:0051287">
    <property type="term" value="F:NAD binding"/>
    <property type="evidence" value="ECO:0007669"/>
    <property type="project" value="InterPro"/>
</dbReference>
<dbReference type="GO" id="GO:0008137">
    <property type="term" value="F:NADH dehydrogenase (ubiquinone) activity"/>
    <property type="evidence" value="ECO:0007669"/>
    <property type="project" value="InterPro"/>
</dbReference>
<dbReference type="GO" id="GO:0050136">
    <property type="term" value="F:NADH:ubiquinone reductase (non-electrogenic) activity"/>
    <property type="evidence" value="ECO:0007669"/>
    <property type="project" value="UniProtKB-UniRule"/>
</dbReference>
<dbReference type="GO" id="GO:0048038">
    <property type="term" value="F:quinone binding"/>
    <property type="evidence" value="ECO:0007669"/>
    <property type="project" value="UniProtKB-KW"/>
</dbReference>
<dbReference type="FunFam" id="1.10.645.10:FF:000001">
    <property type="entry name" value="NADH-quinone oxidoreductase subunit C/D"/>
    <property type="match status" value="1"/>
</dbReference>
<dbReference type="FunFam" id="3.30.460.80:FF:000001">
    <property type="entry name" value="NADH-quinone oxidoreductase subunit C/D"/>
    <property type="match status" value="1"/>
</dbReference>
<dbReference type="Gene3D" id="1.10.645.10">
    <property type="entry name" value="Cytochrome-c3 Hydrogenase, chain B"/>
    <property type="match status" value="1"/>
</dbReference>
<dbReference type="Gene3D" id="3.30.460.80">
    <property type="entry name" value="NADH:ubiquinone oxidoreductase, 30kDa subunit"/>
    <property type="match status" value="1"/>
</dbReference>
<dbReference type="HAMAP" id="MF_01357">
    <property type="entry name" value="NDH1_NuoC"/>
    <property type="match status" value="1"/>
</dbReference>
<dbReference type="HAMAP" id="MF_01359">
    <property type="entry name" value="NDH1_NuoCD_1"/>
    <property type="match status" value="1"/>
</dbReference>
<dbReference type="HAMAP" id="MF_01358">
    <property type="entry name" value="NDH1_NuoD"/>
    <property type="match status" value="1"/>
</dbReference>
<dbReference type="InterPro" id="IPR010218">
    <property type="entry name" value="NADH_DH_suC"/>
</dbReference>
<dbReference type="InterPro" id="IPR023062">
    <property type="entry name" value="NADH_DH_suCD"/>
</dbReference>
<dbReference type="InterPro" id="IPR001135">
    <property type="entry name" value="NADH_Q_OxRdtase_suD"/>
</dbReference>
<dbReference type="InterPro" id="IPR037232">
    <property type="entry name" value="NADH_quin_OxRdtase_su_C/D-like"/>
</dbReference>
<dbReference type="InterPro" id="IPR001268">
    <property type="entry name" value="NADH_UbQ_OxRdtase_30kDa_su"/>
</dbReference>
<dbReference type="InterPro" id="IPR014029">
    <property type="entry name" value="NADH_UbQ_OxRdtase_49kDa_CS"/>
</dbReference>
<dbReference type="InterPro" id="IPR022885">
    <property type="entry name" value="NDH1_su_D/H"/>
</dbReference>
<dbReference type="InterPro" id="IPR029014">
    <property type="entry name" value="NiFe-Hase_large"/>
</dbReference>
<dbReference type="NCBIfam" id="TIGR01961">
    <property type="entry name" value="NuoC_fam"/>
    <property type="match status" value="1"/>
</dbReference>
<dbReference type="NCBIfam" id="TIGR01962">
    <property type="entry name" value="NuoD"/>
    <property type="match status" value="1"/>
</dbReference>
<dbReference type="NCBIfam" id="NF004739">
    <property type="entry name" value="PRK06075.1"/>
    <property type="match status" value="1"/>
</dbReference>
<dbReference type="NCBIfam" id="NF008728">
    <property type="entry name" value="PRK11742.1"/>
    <property type="match status" value="1"/>
</dbReference>
<dbReference type="PANTHER" id="PTHR11993:SF45">
    <property type="entry name" value="NADH-QUINONE OXIDOREDUCTASE SUBUNIT C_D"/>
    <property type="match status" value="1"/>
</dbReference>
<dbReference type="PANTHER" id="PTHR11993">
    <property type="entry name" value="NADH-UBIQUINONE OXIDOREDUCTASE 49 KDA SUBUNIT"/>
    <property type="match status" value="1"/>
</dbReference>
<dbReference type="Pfam" id="PF00329">
    <property type="entry name" value="Complex1_30kDa"/>
    <property type="match status" value="1"/>
</dbReference>
<dbReference type="Pfam" id="PF00346">
    <property type="entry name" value="Complex1_49kDa"/>
    <property type="match status" value="1"/>
</dbReference>
<dbReference type="SUPFAM" id="SSF56762">
    <property type="entry name" value="HydB/Nqo4-like"/>
    <property type="match status" value="1"/>
</dbReference>
<dbReference type="SUPFAM" id="SSF143243">
    <property type="entry name" value="Nqo5-like"/>
    <property type="match status" value="1"/>
</dbReference>
<dbReference type="PROSITE" id="PS00535">
    <property type="entry name" value="COMPLEX1_49K"/>
    <property type="match status" value="1"/>
</dbReference>
<name>NUOCD_PSEP7</name>
<comment type="function">
    <text evidence="1">NDH-1 shuttles electrons from NADH, via FMN and iron-sulfur (Fe-S) centers, to quinones in the respiratory chain. The immediate electron acceptor for the enzyme in this species is believed to be ubiquinone. Couples the redox reaction to proton translocation (for every two electrons transferred, four hydrogen ions are translocated across the cytoplasmic membrane), and thus conserves the redox energy in a proton gradient.</text>
</comment>
<comment type="catalytic activity">
    <reaction evidence="1">
        <text>a quinone + NADH + 5 H(+)(in) = a quinol + NAD(+) + 4 H(+)(out)</text>
        <dbReference type="Rhea" id="RHEA:57888"/>
        <dbReference type="ChEBI" id="CHEBI:15378"/>
        <dbReference type="ChEBI" id="CHEBI:24646"/>
        <dbReference type="ChEBI" id="CHEBI:57540"/>
        <dbReference type="ChEBI" id="CHEBI:57945"/>
        <dbReference type="ChEBI" id="CHEBI:132124"/>
    </reaction>
</comment>
<comment type="subunit">
    <text evidence="1">NDH-1 is composed of 13 different subunits. Subunits NuoB, CD, E, F, and G constitute the peripheral sector of the complex.</text>
</comment>
<comment type="subcellular location">
    <subcellularLocation>
        <location evidence="1">Cell inner membrane</location>
        <topology evidence="1">Peripheral membrane protein</topology>
        <orientation evidence="1">Cytoplasmic side</orientation>
    </subcellularLocation>
</comment>
<comment type="similarity">
    <text evidence="1">In the N-terminal section; belongs to the complex I 30 kDa subunit family.</text>
</comment>
<comment type="similarity">
    <text evidence="1">In the C-terminal section; belongs to the complex I 49 kDa subunit family.</text>
</comment>
<gene>
    <name evidence="1" type="primary">nuoC</name>
    <name evidence="1" type="synonym">nuoCD</name>
    <name evidence="1" type="synonym">nuoD</name>
    <name type="ordered locus">PSPA7_2568</name>
</gene>
<accession>A6V4E7</accession>
<organism>
    <name type="scientific">Pseudomonas paraeruginosa (strain DSM 24068 / PA7)</name>
    <name type="common">Pseudomonas aeruginosa (strain PA7)</name>
    <dbReference type="NCBI Taxonomy" id="381754"/>
    <lineage>
        <taxon>Bacteria</taxon>
        <taxon>Pseudomonadati</taxon>
        <taxon>Pseudomonadota</taxon>
        <taxon>Gammaproteobacteria</taxon>
        <taxon>Pseudomonadales</taxon>
        <taxon>Pseudomonadaceae</taxon>
        <taxon>Pseudomonas</taxon>
        <taxon>Pseudomonas paraeruginosa</taxon>
    </lineage>
</organism>
<keyword id="KW-0997">Cell inner membrane</keyword>
<keyword id="KW-1003">Cell membrane</keyword>
<keyword id="KW-0472">Membrane</keyword>
<keyword id="KW-0511">Multifunctional enzyme</keyword>
<keyword id="KW-0520">NAD</keyword>
<keyword id="KW-0874">Quinone</keyword>
<keyword id="KW-1278">Translocase</keyword>
<keyword id="KW-0813">Transport</keyword>
<keyword id="KW-0830">Ubiquinone</keyword>
<evidence type="ECO:0000255" key="1">
    <source>
        <dbReference type="HAMAP-Rule" id="MF_01359"/>
    </source>
</evidence>
<protein>
    <recommendedName>
        <fullName evidence="1">NADH-quinone oxidoreductase subunit C/D</fullName>
        <ecNumber evidence="1">7.1.1.-</ecNumber>
    </recommendedName>
    <alternativeName>
        <fullName evidence="1">NADH dehydrogenase I subunit C/D</fullName>
    </alternativeName>
    <alternativeName>
        <fullName evidence="1">NDH-1 subunit C/D</fullName>
    </alternativeName>
</protein>
<feature type="chain" id="PRO_0000358655" description="NADH-quinone oxidoreductase subunit C/D">
    <location>
        <begin position="1"/>
        <end position="593"/>
    </location>
</feature>
<feature type="region of interest" description="NADH dehydrogenase I subunit C" evidence="1">
    <location>
        <begin position="1"/>
        <end position="184"/>
    </location>
</feature>
<feature type="region of interest" description="NADH dehydrogenase I subunit D" evidence="1">
    <location>
        <begin position="208"/>
        <end position="593"/>
    </location>
</feature>
<sequence length="593" mass="68350">MTADSALYIPPYKADDQDIVVELNSRFGAETFTVQPTRTGMPVLWVPRERLIEVLTFLRQVPKPYVMLYDLHGVDERLRTHRRGLPNADFSVFYHLMSLERNSDVMIKVALSERDLNLPTATRIWPNANWYEREVWDMYGITFTGHPHLTRMLMPPTWQGHPLRKDYPARATEFDPYSLSAAKQDLEQEALRFKPEDWGMKRHGENEDYMFLNLGPNHPSAHGAFRIILQLDGEEIIDCVPEIGYHHRGAEKMAERQSWHSFIPYTDRIDYLGGVMNNLPYVLSVEKLAGIKVPQRVDVIRIMMAEFFRILNHLLYLGTYIQDVGAMTPVFFTFTDRQRAYKVVEAITGFRLHPAWYRIGGVAHDLPRGWDKLVREFLDWMPKRLDEYETAALKNSILRGRTIGVAQYNTKEALEWGTTGAGLRATGCDFDLRKARPYSGYENFEFEVPLAHNGDAYDRCMVKMGEMRQSLRIIEQCLKNMPEGPYKADHPLTTPPPKERTLQHIETLITHFLQVSWGPVMPANEAFQMIEATKGINSYYLTSDGSTMSYRTRIRTPSFAHLQQIPSVINGSMIADLIAYLGSIDFVMADVDR</sequence>
<reference key="1">
    <citation type="submission" date="2007-06" db="EMBL/GenBank/DDBJ databases">
        <authorList>
            <person name="Dodson R.J."/>
            <person name="Harkins D."/>
            <person name="Paulsen I.T."/>
        </authorList>
    </citation>
    <scope>NUCLEOTIDE SEQUENCE [LARGE SCALE GENOMIC DNA]</scope>
    <source>
        <strain>DSM 24068 / PA7</strain>
    </source>
</reference>